<name>PETD_EUGGR</name>
<evidence type="ECO:0000250" key="1">
    <source>
        <dbReference type="UniProtKB" id="P49489"/>
    </source>
</evidence>
<evidence type="ECO:0000255" key="2"/>
<evidence type="ECO:0000269" key="3">
    <source>
    </source>
</evidence>
<evidence type="ECO:0000303" key="4">
    <source>
    </source>
</evidence>
<evidence type="ECO:0000305" key="5"/>
<gene>
    <name evidence="4" type="primary">petD</name>
</gene>
<dbReference type="EMBL" id="AY216719">
    <property type="protein sequence ID" value="AAO61144.1"/>
    <property type="molecule type" value="mRNA"/>
</dbReference>
<dbReference type="SMR" id="Q84TU6"/>
<dbReference type="GO" id="GO:0009535">
    <property type="term" value="C:chloroplast thylakoid membrane"/>
    <property type="evidence" value="ECO:0007669"/>
    <property type="project" value="UniProtKB-SubCell"/>
</dbReference>
<dbReference type="GO" id="GO:0009512">
    <property type="term" value="C:cytochrome b6f complex"/>
    <property type="evidence" value="ECO:0000314"/>
    <property type="project" value="UniProtKB"/>
</dbReference>
<dbReference type="GO" id="GO:0005739">
    <property type="term" value="C:mitochondrion"/>
    <property type="evidence" value="ECO:0007669"/>
    <property type="project" value="GOC"/>
</dbReference>
<dbReference type="GO" id="GO:0045156">
    <property type="term" value="F:electron transporter, transferring electrons within the cyclic electron transport pathway of photosynthesis activity"/>
    <property type="evidence" value="ECO:0007669"/>
    <property type="project" value="InterPro"/>
</dbReference>
<dbReference type="GO" id="GO:0008121">
    <property type="term" value="F:ubiquinol-cytochrome-c reductase activity"/>
    <property type="evidence" value="ECO:0007669"/>
    <property type="project" value="TreeGrafter"/>
</dbReference>
<dbReference type="GO" id="GO:0006122">
    <property type="term" value="P:mitochondrial electron transport, ubiquinol to cytochrome c"/>
    <property type="evidence" value="ECO:0007669"/>
    <property type="project" value="TreeGrafter"/>
</dbReference>
<dbReference type="GO" id="GO:0009767">
    <property type="term" value="P:photosynthetic electron transport chain"/>
    <property type="evidence" value="ECO:0007669"/>
    <property type="project" value="InterPro"/>
</dbReference>
<dbReference type="CDD" id="cd00290">
    <property type="entry name" value="cytochrome_b_C"/>
    <property type="match status" value="1"/>
</dbReference>
<dbReference type="FunFam" id="1.10.287.980:FF:000001">
    <property type="entry name" value="Cytochrome b6-f complex subunit 4"/>
    <property type="match status" value="1"/>
</dbReference>
<dbReference type="FunFam" id="1.20.5.510:FF:000002">
    <property type="entry name" value="Cytochrome b6-f complex subunit 4"/>
    <property type="match status" value="1"/>
</dbReference>
<dbReference type="Gene3D" id="1.10.287.980">
    <property type="entry name" value="plastocyanin oxidoreductase"/>
    <property type="match status" value="1"/>
</dbReference>
<dbReference type="Gene3D" id="1.20.5.510">
    <property type="entry name" value="Single helix bin"/>
    <property type="match status" value="1"/>
</dbReference>
<dbReference type="HAMAP" id="MF_01344">
    <property type="entry name" value="Cytb6_f_subIV"/>
    <property type="match status" value="1"/>
</dbReference>
<dbReference type="InterPro" id="IPR005798">
    <property type="entry name" value="Cyt_b/b6_C"/>
</dbReference>
<dbReference type="InterPro" id="IPR036150">
    <property type="entry name" value="Cyt_b/b6_C_sf"/>
</dbReference>
<dbReference type="InterPro" id="IPR005870">
    <property type="entry name" value="Cyt_b6/f_cplx_suIV"/>
</dbReference>
<dbReference type="InterPro" id="IPR048260">
    <property type="entry name" value="Cytochrome_b_C_euk/bac"/>
</dbReference>
<dbReference type="NCBIfam" id="TIGR01156">
    <property type="entry name" value="cytb6_f_IV"/>
    <property type="match status" value="1"/>
</dbReference>
<dbReference type="PANTHER" id="PTHR19271">
    <property type="entry name" value="CYTOCHROME B"/>
    <property type="match status" value="1"/>
</dbReference>
<dbReference type="PANTHER" id="PTHR19271:SF41">
    <property type="entry name" value="CYTOCHROME B_B6 C-TERMINAL REGION PROFILE DOMAIN-CONTAINING PROTEIN"/>
    <property type="match status" value="1"/>
</dbReference>
<dbReference type="Pfam" id="PF00032">
    <property type="entry name" value="Cytochrom_B_C"/>
    <property type="match status" value="1"/>
</dbReference>
<dbReference type="PIRSF" id="PIRSF000033">
    <property type="entry name" value="B6f_17K"/>
    <property type="match status" value="1"/>
</dbReference>
<dbReference type="SUPFAM" id="SSF81648">
    <property type="entry name" value="a domain/subunit of cytochrome bc1 complex (Ubiquinol-cytochrome c reductase)"/>
    <property type="match status" value="1"/>
</dbReference>
<dbReference type="PROSITE" id="PS51003">
    <property type="entry name" value="CYTB_CTER"/>
    <property type="match status" value="1"/>
</dbReference>
<reference evidence="5" key="1">
    <citation type="journal article" date="2003" name="Biochim. Biophys. Acta">
        <title>Cytochrome f and subunit IV, two essential components of the photosynthetic bf complex typically encoded in the chloroplast genome, are nucleus-encoded in Euglena gracilis.</title>
        <authorList>
            <person name="Santillan Torres J.L."/>
            <person name="Atteia A."/>
            <person name="Claros M.G."/>
            <person name="Gonzalez-Halphen D."/>
        </authorList>
    </citation>
    <scope>NUCLEOTIDE SEQUENCE [MRNA]</scope>
    <scope>PROTEIN SEQUENCE OF 15-63</scope>
    <scope>SUBCELLULAR LOCATION</scope>
</reference>
<proteinExistence type="evidence at protein level"/>
<protein>
    <recommendedName>
        <fullName>Cytochrome b6-f complex subunit 4, chloroplastic</fullName>
    </recommendedName>
    <alternativeName>
        <fullName>17 kDa polypeptide</fullName>
    </alternativeName>
</protein>
<comment type="function">
    <text evidence="1">Component of the cytochrome b6-f complex, which mediates electron transfer between photosystem II (PSII) and photosystem I (PSI), cyclic electron flow around PSI, and state transitions.</text>
</comment>
<comment type="subunit">
    <text evidence="1">The 4 large subunits of the cytochrome b6-f complex are cytochrome b6, subunit IV (17 kDa polypeptide, petD), cytochrome f and the Rieske protein, while the 4 small subunits are petG, petL, petM and petN. The complex functions as a dimer (By similarity).</text>
</comment>
<comment type="subcellular location">
    <subcellularLocation>
        <location evidence="3">Plastid</location>
        <location evidence="3">Chloroplast thylakoid membrane</location>
        <topology evidence="3">Multi-pass membrane protein</topology>
    </subcellularLocation>
</comment>
<comment type="miscellaneous">
    <text evidence="3">This polypeptide is nuclear encoded in Euglena gracilis, but is chloroplast encoded in other plant species.</text>
</comment>
<comment type="similarity">
    <text evidence="2">Belongs to the cytochrome b family. PetD subfamily.</text>
</comment>
<organism>
    <name type="scientific">Euglena gracilis</name>
    <dbReference type="NCBI Taxonomy" id="3039"/>
    <lineage>
        <taxon>Eukaryota</taxon>
        <taxon>Discoba</taxon>
        <taxon>Euglenozoa</taxon>
        <taxon>Euglenida</taxon>
        <taxon>Spirocuta</taxon>
        <taxon>Euglenophyceae</taxon>
        <taxon>Euglenales</taxon>
        <taxon>Euglenaceae</taxon>
        <taxon>Euglena</taxon>
    </lineage>
</organism>
<accession>Q84TU6</accession>
<keyword id="KW-0150">Chloroplast</keyword>
<keyword id="KW-0903">Direct protein sequencing</keyword>
<keyword id="KW-0249">Electron transport</keyword>
<keyword id="KW-0472">Membrane</keyword>
<keyword id="KW-0602">Photosynthesis</keyword>
<keyword id="KW-0934">Plastid</keyword>
<keyword id="KW-0793">Thylakoid</keyword>
<keyword id="KW-0809">Transit peptide</keyword>
<keyword id="KW-0812">Transmembrane</keyword>
<keyword id="KW-1133">Transmembrane helix</keyword>
<keyword id="KW-0813">Transport</keyword>
<feature type="transit peptide" description="Chloroplast" evidence="3">
    <location>
        <begin position="1" status="less than"/>
        <end position="14"/>
    </location>
</feature>
<feature type="chain" id="PRO_0000006470" description="Cytochrome b6-f complex subunit 4, chloroplastic">
    <location>
        <begin position="15"/>
        <end position="173"/>
    </location>
</feature>
<feature type="transmembrane region" description="Helical" evidence="2">
    <location>
        <begin position="49"/>
        <end position="69"/>
    </location>
</feature>
<feature type="transmembrane region" description="Helical" evidence="2">
    <location>
        <begin position="108"/>
        <end position="128"/>
    </location>
</feature>
<feature type="transmembrane region" description="Helical" evidence="2">
    <location>
        <begin position="144"/>
        <end position="164"/>
    </location>
</feature>
<feature type="sequence conflict" description="In Ref. 1; AA sequence." evidence="5" ref="1">
    <original>R</original>
    <variation>H</variation>
    <location>
        <position position="37"/>
    </location>
</feature>
<feature type="non-terminal residue" evidence="4">
    <location>
        <position position="1"/>
    </location>
</feature>
<sequence length="173" mass="18976">ESALERRSSSVVMNNVMKKPDLSDPKLRAKLAKGMGRNYYGEPAWPNDLLYMFPVCILGTFAAIVGLAVMQPTPTGEPANPFATPLEILPEWYFFPTFNLLRVIPNKLLGVLSMAAVPAGLITVPFIENVNKFQNPFRRPVATSVFLLGTVVAIWLGIGATLPIDKAISLGFW</sequence>